<comment type="function">
    <text evidence="1">F(1)F(0) ATP synthase produces ATP from ADP in the presence of a proton or sodium gradient. F-type ATPases consist of two structural domains, F(1) containing the extramembraneous catalytic core and F(0) containing the membrane proton channel, linked together by a central stalk and a peripheral stalk. During catalysis, ATP synthesis in the catalytic domain of F(1) is coupled via a rotary mechanism of the central stalk subunits to proton translocation.</text>
</comment>
<comment type="function">
    <text evidence="1">This protein is part of the stalk that links CF(0) to CF(1). It either transmits conformational changes from CF(0) to CF(1) or is implicated in proton conduction.</text>
</comment>
<comment type="subunit">
    <text evidence="1">F-type ATPases have 2 components, F(1) - the catalytic core - and F(0) - the membrane proton channel. F(1) has five subunits: alpha(3), beta(3), gamma(1), delta(1), epsilon(1). F(0) has three main subunits: a(1), b(2) and c(10-14). The alpha and beta chains form an alternating ring which encloses part of the gamma chain. F(1) is attached to F(0) by a central stalk formed by the gamma and epsilon chains, while a peripheral stalk is formed by the delta and b chains.</text>
</comment>
<comment type="subcellular location">
    <subcellularLocation>
        <location evidence="1">Cell membrane</location>
        <topology evidence="1">Peripheral membrane protein</topology>
    </subcellularLocation>
</comment>
<comment type="similarity">
    <text evidence="1">Belongs to the ATPase delta chain family.</text>
</comment>
<name>ATPD_LIGS1</name>
<protein>
    <recommendedName>
        <fullName evidence="1">ATP synthase subunit delta</fullName>
    </recommendedName>
    <alternativeName>
        <fullName evidence="1">ATP synthase F(1) sector subunit delta</fullName>
    </alternativeName>
    <alternativeName>
        <fullName evidence="1">F-type ATPase subunit delta</fullName>
        <shortName evidence="1">F-ATPase subunit delta</shortName>
    </alternativeName>
</protein>
<feature type="chain" id="PRO_0000371014" description="ATP synthase subunit delta">
    <location>
        <begin position="1"/>
        <end position="180"/>
    </location>
</feature>
<dbReference type="EMBL" id="CP000233">
    <property type="protein sequence ID" value="ABD99406.1"/>
    <property type="molecule type" value="Genomic_DNA"/>
</dbReference>
<dbReference type="RefSeq" id="WP_011475836.1">
    <property type="nucleotide sequence ID" value="NC_007929.1"/>
</dbReference>
<dbReference type="RefSeq" id="YP_535489.1">
    <property type="nucleotide sequence ID" value="NC_007929.1"/>
</dbReference>
<dbReference type="SMR" id="Q1WUC9"/>
<dbReference type="STRING" id="362948.LSL_0597"/>
<dbReference type="KEGG" id="lsl:LSL_0597"/>
<dbReference type="PATRIC" id="fig|362948.14.peg.676"/>
<dbReference type="HOGENOM" id="CLU_085114_4_1_9"/>
<dbReference type="OrthoDB" id="9786633at2"/>
<dbReference type="Proteomes" id="UP000006559">
    <property type="component" value="Chromosome"/>
</dbReference>
<dbReference type="GO" id="GO:0005886">
    <property type="term" value="C:plasma membrane"/>
    <property type="evidence" value="ECO:0007669"/>
    <property type="project" value="UniProtKB-SubCell"/>
</dbReference>
<dbReference type="GO" id="GO:0045259">
    <property type="term" value="C:proton-transporting ATP synthase complex"/>
    <property type="evidence" value="ECO:0007669"/>
    <property type="project" value="UniProtKB-KW"/>
</dbReference>
<dbReference type="GO" id="GO:0046933">
    <property type="term" value="F:proton-transporting ATP synthase activity, rotational mechanism"/>
    <property type="evidence" value="ECO:0007669"/>
    <property type="project" value="UniProtKB-UniRule"/>
</dbReference>
<dbReference type="Gene3D" id="1.10.520.20">
    <property type="entry name" value="N-terminal domain of the delta subunit of the F1F0-ATP synthase"/>
    <property type="match status" value="1"/>
</dbReference>
<dbReference type="HAMAP" id="MF_01416">
    <property type="entry name" value="ATP_synth_delta_bact"/>
    <property type="match status" value="1"/>
</dbReference>
<dbReference type="InterPro" id="IPR026015">
    <property type="entry name" value="ATP_synth_OSCP/delta_N_sf"/>
</dbReference>
<dbReference type="InterPro" id="IPR000711">
    <property type="entry name" value="ATPase_OSCP/dsu"/>
</dbReference>
<dbReference type="NCBIfam" id="TIGR01145">
    <property type="entry name" value="ATP_synt_delta"/>
    <property type="match status" value="1"/>
</dbReference>
<dbReference type="PANTHER" id="PTHR11910">
    <property type="entry name" value="ATP SYNTHASE DELTA CHAIN"/>
    <property type="match status" value="1"/>
</dbReference>
<dbReference type="Pfam" id="PF00213">
    <property type="entry name" value="OSCP"/>
    <property type="match status" value="1"/>
</dbReference>
<dbReference type="PRINTS" id="PR00125">
    <property type="entry name" value="ATPASEDELTA"/>
</dbReference>
<dbReference type="SUPFAM" id="SSF47928">
    <property type="entry name" value="N-terminal domain of the delta subunit of the F1F0-ATP synthase"/>
    <property type="match status" value="1"/>
</dbReference>
<accession>Q1WUC9</accession>
<evidence type="ECO:0000255" key="1">
    <source>
        <dbReference type="HAMAP-Rule" id="MF_01416"/>
    </source>
</evidence>
<reference key="1">
    <citation type="journal article" date="2006" name="Proc. Natl. Acad. Sci. U.S.A.">
        <title>Multireplicon genome architecture of Lactobacillus salivarius.</title>
        <authorList>
            <person name="Claesson M.J."/>
            <person name="Li Y."/>
            <person name="Leahy S."/>
            <person name="Canchaya C."/>
            <person name="van Pijkeren J.P."/>
            <person name="Cerdeno-Tarraga A.M."/>
            <person name="Parkhill J."/>
            <person name="Flynn S."/>
            <person name="O'Sullivan G.C."/>
            <person name="Collins J.K."/>
            <person name="Higgins D."/>
            <person name="Shanahan F."/>
            <person name="Fitzgerald G.F."/>
            <person name="van Sinderen D."/>
            <person name="O'Toole P.W."/>
        </authorList>
    </citation>
    <scope>NUCLEOTIDE SEQUENCE [LARGE SCALE GENOMIC DNA]</scope>
    <source>
        <strain>UCC118</strain>
    </source>
</reference>
<sequence>MKLDNETIVHRYGKALFELAEEMKIRNKFHSELQEYKKVLQNEPQLKVFMSSNQISPEAKLKIMEILKKDSSKLMTNLLDMLYDYGRITSLEGIIDEFDRLNDEFEKTVRASVITAIELDEERKQKLASSFANVVGAKKVIIDPIVDPGIIGGVILKSESYIYDGSIKTKIARIKRLLLK</sequence>
<gene>
    <name evidence="1" type="primary">atpH</name>
    <name type="ordered locus">LSL_0597</name>
</gene>
<organism>
    <name type="scientific">Ligilactobacillus salivarius (strain UCC118)</name>
    <name type="common">Lactobacillus salivarius</name>
    <dbReference type="NCBI Taxonomy" id="362948"/>
    <lineage>
        <taxon>Bacteria</taxon>
        <taxon>Bacillati</taxon>
        <taxon>Bacillota</taxon>
        <taxon>Bacilli</taxon>
        <taxon>Lactobacillales</taxon>
        <taxon>Lactobacillaceae</taxon>
        <taxon>Ligilactobacillus</taxon>
    </lineage>
</organism>
<proteinExistence type="inferred from homology"/>
<keyword id="KW-0066">ATP synthesis</keyword>
<keyword id="KW-1003">Cell membrane</keyword>
<keyword id="KW-0139">CF(1)</keyword>
<keyword id="KW-0375">Hydrogen ion transport</keyword>
<keyword id="KW-0406">Ion transport</keyword>
<keyword id="KW-0472">Membrane</keyword>
<keyword id="KW-1185">Reference proteome</keyword>
<keyword id="KW-0813">Transport</keyword>